<keyword id="KW-0067">ATP-binding</keyword>
<keyword id="KW-0963">Cytoplasm</keyword>
<keyword id="KW-0324">Glycolysis</keyword>
<keyword id="KW-0418">Kinase</keyword>
<keyword id="KW-0547">Nucleotide-binding</keyword>
<keyword id="KW-0597">Phosphoprotein</keyword>
<keyword id="KW-0808">Transferase</keyword>
<sequence>MNKKTVRDVDVKGKRVFCRVDFNVPMENGAITDDTRIRAALPTIRYLMEQGAKVILASHLGRPKGKVVEELRLNAVARRLSELLGKHVTKTDEAYGDAVKEAISKMNEGDVLLLENVRFYPGEEKNDPELAKAFAELADIYVNDAFGAAHRAHASTEGIAHYLPAVAGFLMEKEIEVLGKALSNPDRPFTAIIGGAKVKDKIGVIENLLNKVDNLIIGGGLAYTFVKALGHEIGKSLLEEDKIELAKSFMEKAKEKGVNFYMPVDVVVADRFANDANTKVVSIDAIPSDWEALDIGPKTRELYRDVIMKSKLVVWNGPMGVFEMDAFAEGTKAVAQALADAVDTYSVIGGGDSAAAVEKFGLAEKMDHISTGGGASLEFMEGKQLPGVVALNDK</sequence>
<gene>
    <name evidence="1" type="primary">pgk</name>
    <name type="ordered locus">GWCH70_2961</name>
</gene>
<evidence type="ECO:0000255" key="1">
    <source>
        <dbReference type="HAMAP-Rule" id="MF_00145"/>
    </source>
</evidence>
<feature type="chain" id="PRO_1000203336" description="Phosphoglycerate kinase">
    <location>
        <begin position="1"/>
        <end position="394"/>
    </location>
</feature>
<feature type="binding site" evidence="1">
    <location>
        <begin position="21"/>
        <end position="23"/>
    </location>
    <ligand>
        <name>substrate</name>
    </ligand>
</feature>
<feature type="binding site" evidence="1">
    <location>
        <position position="36"/>
    </location>
    <ligand>
        <name>substrate</name>
    </ligand>
</feature>
<feature type="binding site" evidence="1">
    <location>
        <begin position="59"/>
        <end position="62"/>
    </location>
    <ligand>
        <name>substrate</name>
    </ligand>
</feature>
<feature type="binding site" evidence="1">
    <location>
        <position position="118"/>
    </location>
    <ligand>
        <name>substrate</name>
    </ligand>
</feature>
<feature type="binding site" evidence="1">
    <location>
        <position position="151"/>
    </location>
    <ligand>
        <name>substrate</name>
    </ligand>
</feature>
<feature type="binding site" evidence="1">
    <location>
        <position position="201"/>
    </location>
    <ligand>
        <name>ATP</name>
        <dbReference type="ChEBI" id="CHEBI:30616"/>
    </ligand>
</feature>
<feature type="binding site" evidence="1">
    <location>
        <position position="323"/>
    </location>
    <ligand>
        <name>ATP</name>
        <dbReference type="ChEBI" id="CHEBI:30616"/>
    </ligand>
</feature>
<feature type="binding site" evidence="1">
    <location>
        <begin position="350"/>
        <end position="353"/>
    </location>
    <ligand>
        <name>ATP</name>
        <dbReference type="ChEBI" id="CHEBI:30616"/>
    </ligand>
</feature>
<feature type="modified residue" description="Phosphoserine" evidence="1">
    <location>
        <position position="183"/>
    </location>
</feature>
<feature type="modified residue" description="Phosphothreonine" evidence="1">
    <location>
        <position position="299"/>
    </location>
</feature>
<dbReference type="EC" id="2.7.2.3" evidence="1"/>
<dbReference type="EMBL" id="CP001638">
    <property type="protein sequence ID" value="ACS25634.1"/>
    <property type="molecule type" value="Genomic_DNA"/>
</dbReference>
<dbReference type="SMR" id="C5D7M4"/>
<dbReference type="STRING" id="471223.GWCH70_2961"/>
<dbReference type="KEGG" id="gwc:GWCH70_2961"/>
<dbReference type="eggNOG" id="COG0126">
    <property type="taxonomic scope" value="Bacteria"/>
</dbReference>
<dbReference type="HOGENOM" id="CLU_025427_0_2_9"/>
<dbReference type="OrthoDB" id="9808460at2"/>
<dbReference type="UniPathway" id="UPA00109">
    <property type="reaction ID" value="UER00185"/>
</dbReference>
<dbReference type="GO" id="GO:0005829">
    <property type="term" value="C:cytosol"/>
    <property type="evidence" value="ECO:0007669"/>
    <property type="project" value="TreeGrafter"/>
</dbReference>
<dbReference type="GO" id="GO:0043531">
    <property type="term" value="F:ADP binding"/>
    <property type="evidence" value="ECO:0007669"/>
    <property type="project" value="TreeGrafter"/>
</dbReference>
<dbReference type="GO" id="GO:0005524">
    <property type="term" value="F:ATP binding"/>
    <property type="evidence" value="ECO:0007669"/>
    <property type="project" value="UniProtKB-KW"/>
</dbReference>
<dbReference type="GO" id="GO:0004618">
    <property type="term" value="F:phosphoglycerate kinase activity"/>
    <property type="evidence" value="ECO:0007669"/>
    <property type="project" value="UniProtKB-UniRule"/>
</dbReference>
<dbReference type="GO" id="GO:0006094">
    <property type="term" value="P:gluconeogenesis"/>
    <property type="evidence" value="ECO:0007669"/>
    <property type="project" value="TreeGrafter"/>
</dbReference>
<dbReference type="GO" id="GO:0006096">
    <property type="term" value="P:glycolytic process"/>
    <property type="evidence" value="ECO:0007669"/>
    <property type="project" value="UniProtKB-UniRule"/>
</dbReference>
<dbReference type="CDD" id="cd00318">
    <property type="entry name" value="Phosphoglycerate_kinase"/>
    <property type="match status" value="1"/>
</dbReference>
<dbReference type="FunFam" id="3.40.50.1260:FF:000003">
    <property type="entry name" value="Phosphoglycerate kinase"/>
    <property type="match status" value="1"/>
</dbReference>
<dbReference type="FunFam" id="3.40.50.1260:FF:000006">
    <property type="entry name" value="Phosphoglycerate kinase"/>
    <property type="match status" value="1"/>
</dbReference>
<dbReference type="Gene3D" id="3.40.50.1260">
    <property type="entry name" value="Phosphoglycerate kinase, N-terminal domain"/>
    <property type="match status" value="2"/>
</dbReference>
<dbReference type="HAMAP" id="MF_00145">
    <property type="entry name" value="Phosphoglyc_kinase"/>
    <property type="match status" value="1"/>
</dbReference>
<dbReference type="InterPro" id="IPR001576">
    <property type="entry name" value="Phosphoglycerate_kinase"/>
</dbReference>
<dbReference type="InterPro" id="IPR015911">
    <property type="entry name" value="Phosphoglycerate_kinase_CS"/>
</dbReference>
<dbReference type="InterPro" id="IPR015824">
    <property type="entry name" value="Phosphoglycerate_kinase_N"/>
</dbReference>
<dbReference type="InterPro" id="IPR036043">
    <property type="entry name" value="Phosphoglycerate_kinase_sf"/>
</dbReference>
<dbReference type="PANTHER" id="PTHR11406">
    <property type="entry name" value="PHOSPHOGLYCERATE KINASE"/>
    <property type="match status" value="1"/>
</dbReference>
<dbReference type="PANTHER" id="PTHR11406:SF23">
    <property type="entry name" value="PHOSPHOGLYCERATE KINASE 1, CHLOROPLASTIC-RELATED"/>
    <property type="match status" value="1"/>
</dbReference>
<dbReference type="Pfam" id="PF00162">
    <property type="entry name" value="PGK"/>
    <property type="match status" value="1"/>
</dbReference>
<dbReference type="PIRSF" id="PIRSF000724">
    <property type="entry name" value="Pgk"/>
    <property type="match status" value="1"/>
</dbReference>
<dbReference type="PRINTS" id="PR00477">
    <property type="entry name" value="PHGLYCKINASE"/>
</dbReference>
<dbReference type="SUPFAM" id="SSF53748">
    <property type="entry name" value="Phosphoglycerate kinase"/>
    <property type="match status" value="1"/>
</dbReference>
<dbReference type="PROSITE" id="PS00111">
    <property type="entry name" value="PGLYCERATE_KINASE"/>
    <property type="match status" value="1"/>
</dbReference>
<reference key="1">
    <citation type="submission" date="2009-06" db="EMBL/GenBank/DDBJ databases">
        <title>Complete sequence of chromosome of Geopacillus sp. WCH70.</title>
        <authorList>
            <consortium name="US DOE Joint Genome Institute"/>
            <person name="Lucas S."/>
            <person name="Copeland A."/>
            <person name="Lapidus A."/>
            <person name="Glavina del Rio T."/>
            <person name="Dalin E."/>
            <person name="Tice H."/>
            <person name="Bruce D."/>
            <person name="Goodwin L."/>
            <person name="Pitluck S."/>
            <person name="Chertkov O."/>
            <person name="Brettin T."/>
            <person name="Detter J.C."/>
            <person name="Han C."/>
            <person name="Larimer F."/>
            <person name="Land M."/>
            <person name="Hauser L."/>
            <person name="Kyrpides N."/>
            <person name="Mikhailova N."/>
            <person name="Brumm P."/>
            <person name="Mead D.A."/>
            <person name="Richardson P."/>
        </authorList>
    </citation>
    <scope>NUCLEOTIDE SEQUENCE [LARGE SCALE GENOMIC DNA]</scope>
    <source>
        <strain>WCH70</strain>
    </source>
</reference>
<protein>
    <recommendedName>
        <fullName evidence="1">Phosphoglycerate kinase</fullName>
        <ecNumber evidence="1">2.7.2.3</ecNumber>
    </recommendedName>
</protein>
<accession>C5D7M4</accession>
<organism>
    <name type="scientific">Geobacillus sp. (strain WCH70)</name>
    <dbReference type="NCBI Taxonomy" id="471223"/>
    <lineage>
        <taxon>Bacteria</taxon>
        <taxon>Bacillati</taxon>
        <taxon>Bacillota</taxon>
        <taxon>Bacilli</taxon>
        <taxon>Bacillales</taxon>
        <taxon>Anoxybacillaceae</taxon>
        <taxon>Geobacillus</taxon>
    </lineage>
</organism>
<proteinExistence type="inferred from homology"/>
<name>PGK_GEOSW</name>
<comment type="catalytic activity">
    <reaction evidence="1">
        <text>(2R)-3-phosphoglycerate + ATP = (2R)-3-phospho-glyceroyl phosphate + ADP</text>
        <dbReference type="Rhea" id="RHEA:14801"/>
        <dbReference type="ChEBI" id="CHEBI:30616"/>
        <dbReference type="ChEBI" id="CHEBI:57604"/>
        <dbReference type="ChEBI" id="CHEBI:58272"/>
        <dbReference type="ChEBI" id="CHEBI:456216"/>
        <dbReference type="EC" id="2.7.2.3"/>
    </reaction>
</comment>
<comment type="pathway">
    <text evidence="1">Carbohydrate degradation; glycolysis; pyruvate from D-glyceraldehyde 3-phosphate: step 2/5.</text>
</comment>
<comment type="subunit">
    <text evidence="1">Monomer.</text>
</comment>
<comment type="subcellular location">
    <subcellularLocation>
        <location evidence="1">Cytoplasm</location>
    </subcellularLocation>
</comment>
<comment type="similarity">
    <text evidence="1">Belongs to the phosphoglycerate kinase family.</text>
</comment>